<evidence type="ECO:0000250" key="1">
    <source>
        <dbReference type="UniProtKB" id="P31713"/>
    </source>
</evidence>
<evidence type="ECO:0000255" key="2">
    <source>
        <dbReference type="PROSITE-ProRule" id="PRU00031"/>
    </source>
</evidence>
<evidence type="ECO:0000269" key="3">
    <source ref="1"/>
</evidence>
<evidence type="ECO:0000303" key="4">
    <source>
    </source>
</evidence>
<evidence type="ECO:0000303" key="5">
    <source ref="1"/>
</evidence>
<evidence type="ECO:0000305" key="6"/>
<evidence type="ECO:0000305" key="7">
    <source ref="1"/>
</evidence>
<comment type="function">
    <text evidence="3">Protease inhibitor.</text>
</comment>
<comment type="subcellular location">
    <subcellularLocation>
        <location evidence="7">Secreted</location>
    </subcellularLocation>
    <subcellularLocation>
        <location evidence="6">Nematocyst</location>
    </subcellularLocation>
</comment>
<comment type="mass spectrometry" mass="6985.0" method="MALDI" evidence="3"/>
<comment type="similarity">
    <text evidence="6">Belongs to the venom Kunitz-type family. Sea anemone type 2 potassium channel toxin subfamily.</text>
</comment>
<protein>
    <recommendedName>
        <fullName evidence="4">PI-actitoxin-Axm2b</fullName>
        <shortName evidence="4">PI-AITX-Axm2b</shortName>
    </recommendedName>
    <alternativeName>
        <fullName evidence="5">AXPI-III</fullName>
    </alternativeName>
</protein>
<reference key="1">
    <citation type="journal article" date="1998" name="Fish. Sci.">
        <title>Amino acid sequence and biological activities of another Kunitz-type protease inhibitor from the sea anemone Anthopleura aff. xanthogrammica.</title>
        <authorList>
            <person name="Minagawa S."/>
            <person name="Ishida M."/>
            <person name="Shimakura K."/>
            <person name="Nagashima Y."/>
            <person name="Shiomi K."/>
        </authorList>
    </citation>
    <scope>PROTEIN SEQUENCE</scope>
    <scope>FUNCTION</scope>
    <scope>MASS SPECTROMETRY</scope>
</reference>
<reference key="2">
    <citation type="journal article" date="2012" name="Toxicon">
        <title>Development of a rational nomenclature for naming peptide and protein toxins from sea anemones.</title>
        <authorList>
            <person name="Oliveira J.S."/>
            <person name="Fuentes-Silva D."/>
            <person name="King G.F."/>
        </authorList>
    </citation>
    <scope>NOMENCLATURE</scope>
</reference>
<sequence length="61" mass="6980">HSSNDFCYLPAVRGRCRGYFPRYFFSSETGKCERFIYGGCGGNRNNFESAQECGSTCYPRE</sequence>
<accession>P0DMX0</accession>
<keyword id="KW-0903">Direct protein sequencing</keyword>
<keyword id="KW-1015">Disulfide bond</keyword>
<keyword id="KW-0166">Nematocyst</keyword>
<keyword id="KW-0646">Protease inhibitor</keyword>
<keyword id="KW-0964">Secreted</keyword>
<keyword id="KW-0722">Serine protease inhibitor</keyword>
<feature type="chain" id="PRO_0000433574" description="PI-actitoxin-Axm2b" evidence="3">
    <location>
        <begin position="1"/>
        <end position="61"/>
    </location>
</feature>
<feature type="domain" description="BPTI/Kunitz inhibitor" evidence="2">
    <location>
        <begin position="7"/>
        <end position="57"/>
    </location>
</feature>
<feature type="site" description="Reactive bond for trypsin" evidence="1">
    <location>
        <begin position="17"/>
        <end position="18"/>
    </location>
</feature>
<feature type="disulfide bond" evidence="2">
    <location>
        <begin position="7"/>
        <end position="57"/>
    </location>
</feature>
<feature type="disulfide bond" evidence="2">
    <location>
        <begin position="16"/>
        <end position="40"/>
    </location>
</feature>
<feature type="disulfide bond" evidence="2">
    <location>
        <begin position="32"/>
        <end position="53"/>
    </location>
</feature>
<organism>
    <name type="scientific">Anthopleura aff. xanthogrammica</name>
    <name type="common">Sea anemone</name>
    <dbReference type="NCBI Taxonomy" id="152178"/>
    <lineage>
        <taxon>Eukaryota</taxon>
        <taxon>Metazoa</taxon>
        <taxon>Cnidaria</taxon>
        <taxon>Anthozoa</taxon>
        <taxon>Hexacorallia</taxon>
        <taxon>Actiniaria</taxon>
        <taxon>Actiniidae</taxon>
        <taxon>Anthopleura</taxon>
    </lineage>
</organism>
<dbReference type="SMR" id="P0DMX0"/>
<dbReference type="GO" id="GO:0005615">
    <property type="term" value="C:extracellular space"/>
    <property type="evidence" value="ECO:0007669"/>
    <property type="project" value="TreeGrafter"/>
</dbReference>
<dbReference type="GO" id="GO:0042151">
    <property type="term" value="C:nematocyst"/>
    <property type="evidence" value="ECO:0007669"/>
    <property type="project" value="UniProtKB-SubCell"/>
</dbReference>
<dbReference type="GO" id="GO:0004867">
    <property type="term" value="F:serine-type endopeptidase inhibitor activity"/>
    <property type="evidence" value="ECO:0007669"/>
    <property type="project" value="UniProtKB-KW"/>
</dbReference>
<dbReference type="CDD" id="cd00109">
    <property type="entry name" value="Kunitz-type"/>
    <property type="match status" value="1"/>
</dbReference>
<dbReference type="FunFam" id="4.10.410.10:FF:000021">
    <property type="entry name" value="Serine protease inhibitor, putative"/>
    <property type="match status" value="1"/>
</dbReference>
<dbReference type="Gene3D" id="4.10.410.10">
    <property type="entry name" value="Pancreatic trypsin inhibitor Kunitz domain"/>
    <property type="match status" value="1"/>
</dbReference>
<dbReference type="InterPro" id="IPR002223">
    <property type="entry name" value="Kunitz_BPTI"/>
</dbReference>
<dbReference type="InterPro" id="IPR036880">
    <property type="entry name" value="Kunitz_BPTI_sf"/>
</dbReference>
<dbReference type="InterPro" id="IPR020901">
    <property type="entry name" value="Prtase_inh_Kunz-CS"/>
</dbReference>
<dbReference type="InterPro" id="IPR050098">
    <property type="entry name" value="TFPI/VKTCI-like"/>
</dbReference>
<dbReference type="PANTHER" id="PTHR10083:SF374">
    <property type="entry name" value="BPTI_KUNITZ INHIBITOR DOMAIN-CONTAINING PROTEIN"/>
    <property type="match status" value="1"/>
</dbReference>
<dbReference type="PANTHER" id="PTHR10083">
    <property type="entry name" value="KUNITZ-TYPE PROTEASE INHIBITOR-RELATED"/>
    <property type="match status" value="1"/>
</dbReference>
<dbReference type="Pfam" id="PF00014">
    <property type="entry name" value="Kunitz_BPTI"/>
    <property type="match status" value="1"/>
</dbReference>
<dbReference type="PRINTS" id="PR00759">
    <property type="entry name" value="BASICPTASE"/>
</dbReference>
<dbReference type="SMART" id="SM00131">
    <property type="entry name" value="KU"/>
    <property type="match status" value="1"/>
</dbReference>
<dbReference type="SUPFAM" id="SSF57362">
    <property type="entry name" value="BPTI-like"/>
    <property type="match status" value="1"/>
</dbReference>
<dbReference type="PROSITE" id="PS00280">
    <property type="entry name" value="BPTI_KUNITZ_1"/>
    <property type="match status" value="1"/>
</dbReference>
<dbReference type="PROSITE" id="PS50279">
    <property type="entry name" value="BPTI_KUNITZ_2"/>
    <property type="match status" value="1"/>
</dbReference>
<proteinExistence type="evidence at protein level"/>
<name>VKT3_ANTAF</name>